<keyword id="KW-0963">Cytoplasm</keyword>
<keyword id="KW-0342">GTP-binding</keyword>
<keyword id="KW-0378">Hydrolase</keyword>
<keyword id="KW-0460">Magnesium</keyword>
<keyword id="KW-0479">Metal-binding</keyword>
<keyword id="KW-0547">Nucleotide-binding</keyword>
<protein>
    <recommendedName>
        <fullName evidence="1">GTPase Obg</fullName>
        <ecNumber evidence="1">3.6.5.-</ecNumber>
    </recommendedName>
    <alternativeName>
        <fullName evidence="1">GTP-binding protein Obg</fullName>
    </alternativeName>
</protein>
<evidence type="ECO:0000255" key="1">
    <source>
        <dbReference type="HAMAP-Rule" id="MF_01454"/>
    </source>
</evidence>
<evidence type="ECO:0000255" key="2">
    <source>
        <dbReference type="PROSITE-ProRule" id="PRU01229"/>
    </source>
</evidence>
<evidence type="ECO:0000255" key="3">
    <source>
        <dbReference type="PROSITE-ProRule" id="PRU01231"/>
    </source>
</evidence>
<proteinExistence type="inferred from homology"/>
<accession>B5E4J4</accession>
<sequence>MFLDTAKIKVKAGNGGDGMVAFRREKYVPNGGPWGGDGGRGGNVVFVVDEGLRTLMDFRYNRHFKADSGEKGMTKGMHGRGAEDLRVRVPQGTTVRDAETGKVLTDLIEHGQEFIVAHGGRGGRGNIRFATPKNPAPEISENGEPGQERELQLELKILADVGLVGFPSVGKSTLLSVITSAKPKIGAYHFTTIVPNLGMVRTQSGESFAVADLPGLIEGASQGVGLGTQFLRHIERTRVILHIIDMSASEGRDPYEDYLAINKELESYNLRLMERPQIIVANKMDMPESQENLEDFKKKLAENYDEFEELPAIFPISGLTKQGLATLLDATAELLDKTPEFLLYDESDMEEEAYYGFDEEEKAFEISRDDDATWVLSGEKLMKLFNMTNFDRDESVMKFARQLRGMGVDEALRARGAKDGDLVRIGKFEFEFVD</sequence>
<reference key="1">
    <citation type="journal article" date="2001" name="Microb. Drug Resist.">
        <title>Annotated draft genomic sequence from a Streptococcus pneumoniae type 19F clinical isolate.</title>
        <authorList>
            <person name="Dopazo J."/>
            <person name="Mendoza A."/>
            <person name="Herrero J."/>
            <person name="Caldara F."/>
            <person name="Humbert Y."/>
            <person name="Friedli L."/>
            <person name="Guerrier M."/>
            <person name="Grand-Schenk E."/>
            <person name="Gandin C."/>
            <person name="de Francesco M."/>
            <person name="Polissi A."/>
            <person name="Buell G."/>
            <person name="Feger G."/>
            <person name="Garcia E."/>
            <person name="Peitsch M."/>
            <person name="Garcia-Bustos J.F."/>
        </authorList>
    </citation>
    <scope>NUCLEOTIDE SEQUENCE [LARGE SCALE GENOMIC DNA]</scope>
    <source>
        <strain>G54</strain>
    </source>
</reference>
<reference key="2">
    <citation type="submission" date="2008-03" db="EMBL/GenBank/DDBJ databases">
        <title>Pneumococcal beta glucoside metabolism investigated by whole genome comparison.</title>
        <authorList>
            <person name="Mulas L."/>
            <person name="Trappetti C."/>
            <person name="Hakenbeck R."/>
            <person name="Iannelli F."/>
            <person name="Pozzi G."/>
            <person name="Davidsen T.M."/>
            <person name="Tettelin H."/>
            <person name="Oggioni M."/>
        </authorList>
    </citation>
    <scope>NUCLEOTIDE SEQUENCE [LARGE SCALE GENOMIC DNA]</scope>
    <source>
        <strain>G54</strain>
    </source>
</reference>
<feature type="chain" id="PRO_0000386302" description="GTPase Obg">
    <location>
        <begin position="1"/>
        <end position="434"/>
    </location>
</feature>
<feature type="domain" description="Obg" evidence="3">
    <location>
        <begin position="1"/>
        <end position="158"/>
    </location>
</feature>
<feature type="domain" description="OBG-type G" evidence="1">
    <location>
        <begin position="159"/>
        <end position="336"/>
    </location>
</feature>
<feature type="domain" description="OCT" evidence="2">
    <location>
        <begin position="356"/>
        <end position="434"/>
    </location>
</feature>
<feature type="binding site" evidence="1">
    <location>
        <begin position="165"/>
        <end position="172"/>
    </location>
    <ligand>
        <name>GTP</name>
        <dbReference type="ChEBI" id="CHEBI:37565"/>
    </ligand>
</feature>
<feature type="binding site" evidence="1">
    <location>
        <position position="172"/>
    </location>
    <ligand>
        <name>Mg(2+)</name>
        <dbReference type="ChEBI" id="CHEBI:18420"/>
    </ligand>
</feature>
<feature type="binding site" evidence="1">
    <location>
        <begin position="190"/>
        <end position="194"/>
    </location>
    <ligand>
        <name>GTP</name>
        <dbReference type="ChEBI" id="CHEBI:37565"/>
    </ligand>
</feature>
<feature type="binding site" evidence="1">
    <location>
        <position position="192"/>
    </location>
    <ligand>
        <name>Mg(2+)</name>
        <dbReference type="ChEBI" id="CHEBI:18420"/>
    </ligand>
</feature>
<feature type="binding site" evidence="1">
    <location>
        <begin position="212"/>
        <end position="215"/>
    </location>
    <ligand>
        <name>GTP</name>
        <dbReference type="ChEBI" id="CHEBI:37565"/>
    </ligand>
</feature>
<feature type="binding site" evidence="1">
    <location>
        <begin position="282"/>
        <end position="285"/>
    </location>
    <ligand>
        <name>GTP</name>
        <dbReference type="ChEBI" id="CHEBI:37565"/>
    </ligand>
</feature>
<feature type="binding site" evidence="1">
    <location>
        <begin position="317"/>
        <end position="319"/>
    </location>
    <ligand>
        <name>GTP</name>
        <dbReference type="ChEBI" id="CHEBI:37565"/>
    </ligand>
</feature>
<comment type="function">
    <text evidence="1">An essential GTPase which binds GTP, GDP and possibly (p)ppGpp with moderate affinity, with high nucleotide exchange rates and a fairly low GTP hydrolysis rate. Plays a role in control of the cell cycle, stress response, ribosome biogenesis and in those bacteria that undergo differentiation, in morphogenesis control.</text>
</comment>
<comment type="cofactor">
    <cofactor evidence="1">
        <name>Mg(2+)</name>
        <dbReference type="ChEBI" id="CHEBI:18420"/>
    </cofactor>
</comment>
<comment type="subunit">
    <text evidence="1">Monomer.</text>
</comment>
<comment type="subcellular location">
    <subcellularLocation>
        <location evidence="1">Cytoplasm</location>
    </subcellularLocation>
</comment>
<comment type="similarity">
    <text evidence="1">Belongs to the TRAFAC class OBG-HflX-like GTPase superfamily. OBG GTPase family.</text>
</comment>
<dbReference type="EC" id="3.6.5.-" evidence="1"/>
<dbReference type="EMBL" id="CP001015">
    <property type="protein sequence ID" value="ACF55913.1"/>
    <property type="molecule type" value="Genomic_DNA"/>
</dbReference>
<dbReference type="SMR" id="B5E4J4"/>
<dbReference type="KEGG" id="spx:SPG_1000"/>
<dbReference type="HOGENOM" id="CLU_011747_2_1_9"/>
<dbReference type="GO" id="GO:0005737">
    <property type="term" value="C:cytoplasm"/>
    <property type="evidence" value="ECO:0007669"/>
    <property type="project" value="UniProtKB-SubCell"/>
</dbReference>
<dbReference type="GO" id="GO:0005525">
    <property type="term" value="F:GTP binding"/>
    <property type="evidence" value="ECO:0007669"/>
    <property type="project" value="UniProtKB-UniRule"/>
</dbReference>
<dbReference type="GO" id="GO:0003924">
    <property type="term" value="F:GTPase activity"/>
    <property type="evidence" value="ECO:0007669"/>
    <property type="project" value="UniProtKB-UniRule"/>
</dbReference>
<dbReference type="GO" id="GO:0000287">
    <property type="term" value="F:magnesium ion binding"/>
    <property type="evidence" value="ECO:0007669"/>
    <property type="project" value="InterPro"/>
</dbReference>
<dbReference type="GO" id="GO:0042254">
    <property type="term" value="P:ribosome biogenesis"/>
    <property type="evidence" value="ECO:0007669"/>
    <property type="project" value="UniProtKB-UniRule"/>
</dbReference>
<dbReference type="CDD" id="cd01898">
    <property type="entry name" value="Obg"/>
    <property type="match status" value="1"/>
</dbReference>
<dbReference type="FunFam" id="2.70.210.12:FF:000001">
    <property type="entry name" value="GTPase Obg"/>
    <property type="match status" value="1"/>
</dbReference>
<dbReference type="FunFam" id="3.40.50.300:FF:000515">
    <property type="entry name" value="GTPase Obg"/>
    <property type="match status" value="1"/>
</dbReference>
<dbReference type="Gene3D" id="3.30.300.350">
    <property type="entry name" value="GTP-binding protein OBG, C-terminal domain"/>
    <property type="match status" value="1"/>
</dbReference>
<dbReference type="Gene3D" id="2.70.210.12">
    <property type="entry name" value="GTP1/OBG domain"/>
    <property type="match status" value="1"/>
</dbReference>
<dbReference type="Gene3D" id="3.40.50.300">
    <property type="entry name" value="P-loop containing nucleotide triphosphate hydrolases"/>
    <property type="match status" value="1"/>
</dbReference>
<dbReference type="HAMAP" id="MF_01454">
    <property type="entry name" value="GTPase_Obg"/>
    <property type="match status" value="1"/>
</dbReference>
<dbReference type="InterPro" id="IPR031167">
    <property type="entry name" value="G_OBG"/>
</dbReference>
<dbReference type="InterPro" id="IPR006073">
    <property type="entry name" value="GTP-bd"/>
</dbReference>
<dbReference type="InterPro" id="IPR014100">
    <property type="entry name" value="GTP-bd_Obg/CgtA"/>
</dbReference>
<dbReference type="InterPro" id="IPR036346">
    <property type="entry name" value="GTP-bd_prot_GTP1/OBG_C_sf"/>
</dbReference>
<dbReference type="InterPro" id="IPR006074">
    <property type="entry name" value="GTP1-OBG_CS"/>
</dbReference>
<dbReference type="InterPro" id="IPR006169">
    <property type="entry name" value="GTP1_OBG_dom"/>
</dbReference>
<dbReference type="InterPro" id="IPR036726">
    <property type="entry name" value="GTP1_OBG_dom_sf"/>
</dbReference>
<dbReference type="InterPro" id="IPR045086">
    <property type="entry name" value="OBG_GTPase"/>
</dbReference>
<dbReference type="InterPro" id="IPR015349">
    <property type="entry name" value="OCT_dom"/>
</dbReference>
<dbReference type="InterPro" id="IPR027417">
    <property type="entry name" value="P-loop_NTPase"/>
</dbReference>
<dbReference type="InterPro" id="IPR005225">
    <property type="entry name" value="Small_GTP-bd"/>
</dbReference>
<dbReference type="NCBIfam" id="TIGR02729">
    <property type="entry name" value="Obg_CgtA"/>
    <property type="match status" value="1"/>
</dbReference>
<dbReference type="NCBIfam" id="TIGR03595">
    <property type="entry name" value="Obg_CgtA_exten"/>
    <property type="match status" value="1"/>
</dbReference>
<dbReference type="NCBIfam" id="NF008954">
    <property type="entry name" value="PRK12296.1"/>
    <property type="match status" value="1"/>
</dbReference>
<dbReference type="NCBIfam" id="NF008955">
    <property type="entry name" value="PRK12297.1"/>
    <property type="match status" value="1"/>
</dbReference>
<dbReference type="NCBIfam" id="NF008956">
    <property type="entry name" value="PRK12299.1"/>
    <property type="match status" value="1"/>
</dbReference>
<dbReference type="NCBIfam" id="TIGR00231">
    <property type="entry name" value="small_GTP"/>
    <property type="match status" value="1"/>
</dbReference>
<dbReference type="PANTHER" id="PTHR11702">
    <property type="entry name" value="DEVELOPMENTALLY REGULATED GTP-BINDING PROTEIN-RELATED"/>
    <property type="match status" value="1"/>
</dbReference>
<dbReference type="PANTHER" id="PTHR11702:SF31">
    <property type="entry name" value="MITOCHONDRIAL RIBOSOME-ASSOCIATED GTPASE 2"/>
    <property type="match status" value="1"/>
</dbReference>
<dbReference type="Pfam" id="PF09269">
    <property type="entry name" value="DUF1967"/>
    <property type="match status" value="1"/>
</dbReference>
<dbReference type="Pfam" id="PF01018">
    <property type="entry name" value="GTP1_OBG"/>
    <property type="match status" value="1"/>
</dbReference>
<dbReference type="Pfam" id="PF01926">
    <property type="entry name" value="MMR_HSR1"/>
    <property type="match status" value="1"/>
</dbReference>
<dbReference type="PIRSF" id="PIRSF002401">
    <property type="entry name" value="GTP_bd_Obg/CgtA"/>
    <property type="match status" value="1"/>
</dbReference>
<dbReference type="PRINTS" id="PR00326">
    <property type="entry name" value="GTP1OBG"/>
</dbReference>
<dbReference type="SUPFAM" id="SSF102741">
    <property type="entry name" value="Obg GTP-binding protein C-terminal domain"/>
    <property type="match status" value="1"/>
</dbReference>
<dbReference type="SUPFAM" id="SSF82051">
    <property type="entry name" value="Obg GTP-binding protein N-terminal domain"/>
    <property type="match status" value="1"/>
</dbReference>
<dbReference type="SUPFAM" id="SSF52540">
    <property type="entry name" value="P-loop containing nucleoside triphosphate hydrolases"/>
    <property type="match status" value="1"/>
</dbReference>
<dbReference type="PROSITE" id="PS51710">
    <property type="entry name" value="G_OBG"/>
    <property type="match status" value="1"/>
</dbReference>
<dbReference type="PROSITE" id="PS00905">
    <property type="entry name" value="GTP1_OBG"/>
    <property type="match status" value="1"/>
</dbReference>
<dbReference type="PROSITE" id="PS51883">
    <property type="entry name" value="OBG"/>
    <property type="match status" value="1"/>
</dbReference>
<dbReference type="PROSITE" id="PS51881">
    <property type="entry name" value="OCT"/>
    <property type="match status" value="1"/>
</dbReference>
<name>OBG_STRP4</name>
<organism>
    <name type="scientific">Streptococcus pneumoniae serotype 19F (strain G54)</name>
    <dbReference type="NCBI Taxonomy" id="512566"/>
    <lineage>
        <taxon>Bacteria</taxon>
        <taxon>Bacillati</taxon>
        <taxon>Bacillota</taxon>
        <taxon>Bacilli</taxon>
        <taxon>Lactobacillales</taxon>
        <taxon>Streptococcaceae</taxon>
        <taxon>Streptococcus</taxon>
    </lineage>
</organism>
<gene>
    <name evidence="1" type="primary">obg</name>
    <name type="ordered locus">SPG_1000</name>
</gene>